<comment type="function">
    <text evidence="1">Binds to DNA and alters its conformation. May be involved in regulation of gene expression, nucleoid organization and DNA protection.</text>
</comment>
<comment type="subunit">
    <text evidence="1">Homodimer.</text>
</comment>
<comment type="subcellular location">
    <subcellularLocation>
        <location evidence="1">Cytoplasm</location>
        <location evidence="1">Nucleoid</location>
    </subcellularLocation>
</comment>
<comment type="similarity">
    <text evidence="1">Belongs to the YbaB/EbfC family.</text>
</comment>
<keyword id="KW-0963">Cytoplasm</keyword>
<keyword id="KW-0238">DNA-binding</keyword>
<protein>
    <recommendedName>
        <fullName evidence="1">Nucleoid-associated protein SpyM50270</fullName>
    </recommendedName>
</protein>
<proteinExistence type="inferred from homology"/>
<name>Y270_STRPG</name>
<reference key="1">
    <citation type="journal article" date="2007" name="J. Bacteriol.">
        <title>Complete genome of acute rheumatic fever-associated serotype M5 Streptococcus pyogenes strain Manfredo.</title>
        <authorList>
            <person name="Holden M.T.G."/>
            <person name="Scott A."/>
            <person name="Cherevach I."/>
            <person name="Chillingworth T."/>
            <person name="Churcher C."/>
            <person name="Cronin A."/>
            <person name="Dowd L."/>
            <person name="Feltwell T."/>
            <person name="Hamlin N."/>
            <person name="Holroyd S."/>
            <person name="Jagels K."/>
            <person name="Moule S."/>
            <person name="Mungall K."/>
            <person name="Quail M.A."/>
            <person name="Price C."/>
            <person name="Rabbinowitsch E."/>
            <person name="Sharp S."/>
            <person name="Skelton J."/>
            <person name="Whitehead S."/>
            <person name="Barrell B.G."/>
            <person name="Kehoe M."/>
            <person name="Parkhill J."/>
        </authorList>
    </citation>
    <scope>NUCLEOTIDE SEQUENCE [LARGE SCALE GENOMIC DNA]</scope>
    <source>
        <strain>Manfredo</strain>
    </source>
</reference>
<gene>
    <name type="ordered locus">SpyM50270</name>
</gene>
<sequence length="99" mass="10974">MMNMQNMMRQAQKLQKQMEQKQADLAAMQFTGKSAQDLVTATFTGDKKLVGIDFKEAVVDPEDVETLQDMTTQAINDALTQIDEATKKTLGAFAGKLPF</sequence>
<accession>A2RCN9</accession>
<organism>
    <name type="scientific">Streptococcus pyogenes serotype M5 (strain Manfredo)</name>
    <dbReference type="NCBI Taxonomy" id="160491"/>
    <lineage>
        <taxon>Bacteria</taxon>
        <taxon>Bacillati</taxon>
        <taxon>Bacillota</taxon>
        <taxon>Bacilli</taxon>
        <taxon>Lactobacillales</taxon>
        <taxon>Streptococcaceae</taxon>
        <taxon>Streptococcus</taxon>
    </lineage>
</organism>
<evidence type="ECO:0000255" key="1">
    <source>
        <dbReference type="HAMAP-Rule" id="MF_00274"/>
    </source>
</evidence>
<dbReference type="EMBL" id="AM295007">
    <property type="protein sequence ID" value="CAM29612.1"/>
    <property type="molecule type" value="Genomic_DNA"/>
</dbReference>
<dbReference type="RefSeq" id="WP_002992264.1">
    <property type="nucleotide sequence ID" value="NC_009332.1"/>
</dbReference>
<dbReference type="SMR" id="A2RCN9"/>
<dbReference type="KEGG" id="spf:SpyM50270"/>
<dbReference type="HOGENOM" id="CLU_140930_1_1_9"/>
<dbReference type="GO" id="GO:0043590">
    <property type="term" value="C:bacterial nucleoid"/>
    <property type="evidence" value="ECO:0007669"/>
    <property type="project" value="UniProtKB-UniRule"/>
</dbReference>
<dbReference type="GO" id="GO:0005829">
    <property type="term" value="C:cytosol"/>
    <property type="evidence" value="ECO:0007669"/>
    <property type="project" value="TreeGrafter"/>
</dbReference>
<dbReference type="GO" id="GO:0003677">
    <property type="term" value="F:DNA binding"/>
    <property type="evidence" value="ECO:0007669"/>
    <property type="project" value="UniProtKB-UniRule"/>
</dbReference>
<dbReference type="Gene3D" id="3.30.1310.10">
    <property type="entry name" value="Nucleoid-associated protein YbaB-like domain"/>
    <property type="match status" value="1"/>
</dbReference>
<dbReference type="HAMAP" id="MF_00274">
    <property type="entry name" value="DNA_YbaB_EbfC"/>
    <property type="match status" value="1"/>
</dbReference>
<dbReference type="InterPro" id="IPR036894">
    <property type="entry name" value="YbaB-like_sf"/>
</dbReference>
<dbReference type="InterPro" id="IPR004401">
    <property type="entry name" value="YbaB/EbfC"/>
</dbReference>
<dbReference type="NCBIfam" id="TIGR00103">
    <property type="entry name" value="DNA_YbaB_EbfC"/>
    <property type="match status" value="1"/>
</dbReference>
<dbReference type="PANTHER" id="PTHR33449">
    <property type="entry name" value="NUCLEOID-ASSOCIATED PROTEIN YBAB"/>
    <property type="match status" value="1"/>
</dbReference>
<dbReference type="PANTHER" id="PTHR33449:SF1">
    <property type="entry name" value="NUCLEOID-ASSOCIATED PROTEIN YBAB"/>
    <property type="match status" value="1"/>
</dbReference>
<dbReference type="Pfam" id="PF02575">
    <property type="entry name" value="YbaB_DNA_bd"/>
    <property type="match status" value="1"/>
</dbReference>
<dbReference type="PIRSF" id="PIRSF004555">
    <property type="entry name" value="UCP004555"/>
    <property type="match status" value="1"/>
</dbReference>
<dbReference type="SUPFAM" id="SSF82607">
    <property type="entry name" value="YbaB-like"/>
    <property type="match status" value="1"/>
</dbReference>
<feature type="chain" id="PRO_1000003842" description="Nucleoid-associated protein SpyM50270">
    <location>
        <begin position="1"/>
        <end position="99"/>
    </location>
</feature>